<organism>
    <name type="scientific">Exiguobacterium sp. (strain ATCC BAA-1283 / AT1b)</name>
    <dbReference type="NCBI Taxonomy" id="360911"/>
    <lineage>
        <taxon>Bacteria</taxon>
        <taxon>Bacillati</taxon>
        <taxon>Bacillota</taxon>
        <taxon>Bacilli</taxon>
        <taxon>Bacillales</taxon>
        <taxon>Bacillales Family XII. Incertae Sedis</taxon>
        <taxon>Exiguobacterium</taxon>
    </lineage>
</organism>
<proteinExistence type="inferred from homology"/>
<protein>
    <recommendedName>
        <fullName evidence="1">UPF0122 protein EAT1b_2891</fullName>
    </recommendedName>
</protein>
<comment type="function">
    <text evidence="1">Might take part in the signal recognition particle (SRP) pathway. This is inferred from the conservation of its genetic proximity to ftsY/ffh. May be a regulatory protein.</text>
</comment>
<comment type="similarity">
    <text evidence="1">Belongs to the UPF0122 family.</text>
</comment>
<name>Y2891_EXISA</name>
<dbReference type="EMBL" id="CP001615">
    <property type="protein sequence ID" value="ACQ71805.1"/>
    <property type="molecule type" value="Genomic_DNA"/>
</dbReference>
<dbReference type="RefSeq" id="WP_015881364.1">
    <property type="nucleotide sequence ID" value="NC_012673.1"/>
</dbReference>
<dbReference type="SMR" id="C4L5Z9"/>
<dbReference type="STRING" id="360911.EAT1b_2891"/>
<dbReference type="KEGG" id="eat:EAT1b_2891"/>
<dbReference type="eggNOG" id="COG2739">
    <property type="taxonomic scope" value="Bacteria"/>
</dbReference>
<dbReference type="HOGENOM" id="CLU_129218_1_0_9"/>
<dbReference type="OrthoDB" id="6392at2"/>
<dbReference type="Proteomes" id="UP000000716">
    <property type="component" value="Chromosome"/>
</dbReference>
<dbReference type="Gene3D" id="1.10.10.10">
    <property type="entry name" value="Winged helix-like DNA-binding domain superfamily/Winged helix DNA-binding domain"/>
    <property type="match status" value="1"/>
</dbReference>
<dbReference type="HAMAP" id="MF_00245">
    <property type="entry name" value="UPF0122"/>
    <property type="match status" value="1"/>
</dbReference>
<dbReference type="InterPro" id="IPR013324">
    <property type="entry name" value="RNA_pol_sigma_r3/r4-like"/>
</dbReference>
<dbReference type="InterPro" id="IPR007394">
    <property type="entry name" value="UPF0122"/>
</dbReference>
<dbReference type="InterPro" id="IPR054831">
    <property type="entry name" value="UPF0122_fam_protein"/>
</dbReference>
<dbReference type="InterPro" id="IPR036388">
    <property type="entry name" value="WH-like_DNA-bd_sf"/>
</dbReference>
<dbReference type="NCBIfam" id="NF001068">
    <property type="entry name" value="PRK00118.1-4"/>
    <property type="match status" value="1"/>
</dbReference>
<dbReference type="NCBIfam" id="NF001070">
    <property type="entry name" value="PRK00118.1-6"/>
    <property type="match status" value="1"/>
</dbReference>
<dbReference type="NCBIfam" id="NF045758">
    <property type="entry name" value="YlxM"/>
    <property type="match status" value="1"/>
</dbReference>
<dbReference type="PANTHER" id="PTHR40083">
    <property type="entry name" value="UPF0122 PROTEIN CBO2450/CLC_2298"/>
    <property type="match status" value="1"/>
</dbReference>
<dbReference type="PANTHER" id="PTHR40083:SF1">
    <property type="entry name" value="UPF0122 PROTEIN YLXM"/>
    <property type="match status" value="1"/>
</dbReference>
<dbReference type="Pfam" id="PF04297">
    <property type="entry name" value="UPF0122"/>
    <property type="match status" value="1"/>
</dbReference>
<dbReference type="SUPFAM" id="SSF88659">
    <property type="entry name" value="Sigma3 and sigma4 domains of RNA polymerase sigma factors"/>
    <property type="match status" value="1"/>
</dbReference>
<accession>C4L5Z9</accession>
<gene>
    <name type="ordered locus">EAT1b_2891</name>
</gene>
<feature type="chain" id="PRO_1000204491" description="UPF0122 protein EAT1b_2891">
    <location>
        <begin position="1"/>
        <end position="107"/>
    </location>
</feature>
<evidence type="ECO:0000255" key="1">
    <source>
        <dbReference type="HAMAP-Rule" id="MF_00245"/>
    </source>
</evidence>
<reference key="1">
    <citation type="journal article" date="2011" name="J. Bacteriol.">
        <title>Complete genome sequence of the Thermophilic Bacterium Exiguobacterium sp. AT1b.</title>
        <authorList>
            <person name="Vishnivetskaya T.A."/>
            <person name="Lucas S."/>
            <person name="Copeland A."/>
            <person name="Lapidus A."/>
            <person name="Glavina del Rio T."/>
            <person name="Dalin E."/>
            <person name="Tice H."/>
            <person name="Bruce D.C."/>
            <person name="Goodwin L.A."/>
            <person name="Pitluck S."/>
            <person name="Saunders E."/>
            <person name="Brettin T."/>
            <person name="Detter C."/>
            <person name="Han C."/>
            <person name="Larimer F."/>
            <person name="Land M.L."/>
            <person name="Hauser L.J."/>
            <person name="Kyrpides N.C."/>
            <person name="Ovchinnikova G."/>
            <person name="Kathariou S."/>
            <person name="Ramaley R.F."/>
            <person name="Rodrigues D.F."/>
            <person name="Hendrix C."/>
            <person name="Richardson P."/>
            <person name="Tiedje J.M."/>
        </authorList>
    </citation>
    <scope>NUCLEOTIDE SEQUENCE [LARGE SCALE GENOMIC DNA]</scope>
    <source>
        <strain>ATCC BAA-1283 / AT1b</strain>
    </source>
</reference>
<sequence>MTLEKTNRMNYLIDFYQALLTPKQRNYMSLYYLDDYSLGEIAEEFEVSRQAVYDNIKRTETMLEQYEEKLALFEKFEQRQQLLQTLKRQVELTDDVSATISALENLE</sequence>